<organism>
    <name type="scientific">Actinobacillus pleuropneumoniae serotype 7 (strain AP76)</name>
    <dbReference type="NCBI Taxonomy" id="537457"/>
    <lineage>
        <taxon>Bacteria</taxon>
        <taxon>Pseudomonadati</taxon>
        <taxon>Pseudomonadota</taxon>
        <taxon>Gammaproteobacteria</taxon>
        <taxon>Pasteurellales</taxon>
        <taxon>Pasteurellaceae</taxon>
        <taxon>Actinobacillus</taxon>
    </lineage>
</organism>
<accession>B3H338</accession>
<protein>
    <recommendedName>
        <fullName evidence="1">Deoxyuridine 5'-triphosphate nucleotidohydrolase</fullName>
        <shortName evidence="1">dUTPase</shortName>
        <ecNumber evidence="1">3.6.1.23</ecNumber>
    </recommendedName>
    <alternativeName>
        <fullName evidence="1">dUTP pyrophosphatase</fullName>
    </alternativeName>
</protein>
<gene>
    <name evidence="1" type="primary">dut</name>
    <name type="ordered locus">APP7_2056</name>
</gene>
<dbReference type="EC" id="3.6.1.23" evidence="1"/>
<dbReference type="EMBL" id="CP001091">
    <property type="protein sequence ID" value="ACE62708.1"/>
    <property type="molecule type" value="Genomic_DNA"/>
</dbReference>
<dbReference type="RefSeq" id="WP_005599752.1">
    <property type="nucleotide sequence ID" value="NC_010939.1"/>
</dbReference>
<dbReference type="SMR" id="B3H338"/>
<dbReference type="GeneID" id="48600269"/>
<dbReference type="KEGG" id="apa:APP7_2056"/>
<dbReference type="HOGENOM" id="CLU_068508_1_1_6"/>
<dbReference type="UniPathway" id="UPA00610">
    <property type="reaction ID" value="UER00666"/>
</dbReference>
<dbReference type="Proteomes" id="UP000001226">
    <property type="component" value="Chromosome"/>
</dbReference>
<dbReference type="GO" id="GO:0004170">
    <property type="term" value="F:dUTP diphosphatase activity"/>
    <property type="evidence" value="ECO:0007669"/>
    <property type="project" value="UniProtKB-UniRule"/>
</dbReference>
<dbReference type="GO" id="GO:0000287">
    <property type="term" value="F:magnesium ion binding"/>
    <property type="evidence" value="ECO:0007669"/>
    <property type="project" value="UniProtKB-UniRule"/>
</dbReference>
<dbReference type="GO" id="GO:0006226">
    <property type="term" value="P:dUMP biosynthetic process"/>
    <property type="evidence" value="ECO:0007669"/>
    <property type="project" value="UniProtKB-UniRule"/>
</dbReference>
<dbReference type="GO" id="GO:0046081">
    <property type="term" value="P:dUTP catabolic process"/>
    <property type="evidence" value="ECO:0007669"/>
    <property type="project" value="InterPro"/>
</dbReference>
<dbReference type="CDD" id="cd07557">
    <property type="entry name" value="trimeric_dUTPase"/>
    <property type="match status" value="1"/>
</dbReference>
<dbReference type="FunFam" id="2.70.40.10:FF:000002">
    <property type="entry name" value="dUTP diphosphatase"/>
    <property type="match status" value="1"/>
</dbReference>
<dbReference type="Gene3D" id="2.70.40.10">
    <property type="match status" value="1"/>
</dbReference>
<dbReference type="HAMAP" id="MF_00116">
    <property type="entry name" value="dUTPase_bact"/>
    <property type="match status" value="1"/>
</dbReference>
<dbReference type="InterPro" id="IPR008181">
    <property type="entry name" value="dUTPase"/>
</dbReference>
<dbReference type="InterPro" id="IPR029054">
    <property type="entry name" value="dUTPase-like"/>
</dbReference>
<dbReference type="InterPro" id="IPR036157">
    <property type="entry name" value="dUTPase-like_sf"/>
</dbReference>
<dbReference type="InterPro" id="IPR033704">
    <property type="entry name" value="dUTPase_trimeric"/>
</dbReference>
<dbReference type="NCBIfam" id="TIGR00576">
    <property type="entry name" value="dut"/>
    <property type="match status" value="1"/>
</dbReference>
<dbReference type="NCBIfam" id="NF001862">
    <property type="entry name" value="PRK00601.1"/>
    <property type="match status" value="1"/>
</dbReference>
<dbReference type="PANTHER" id="PTHR11241">
    <property type="entry name" value="DEOXYURIDINE 5'-TRIPHOSPHATE NUCLEOTIDOHYDROLASE"/>
    <property type="match status" value="1"/>
</dbReference>
<dbReference type="PANTHER" id="PTHR11241:SF0">
    <property type="entry name" value="DEOXYURIDINE 5'-TRIPHOSPHATE NUCLEOTIDOHYDROLASE"/>
    <property type="match status" value="1"/>
</dbReference>
<dbReference type="Pfam" id="PF00692">
    <property type="entry name" value="dUTPase"/>
    <property type="match status" value="1"/>
</dbReference>
<dbReference type="SUPFAM" id="SSF51283">
    <property type="entry name" value="dUTPase-like"/>
    <property type="match status" value="1"/>
</dbReference>
<evidence type="ECO:0000255" key="1">
    <source>
        <dbReference type="HAMAP-Rule" id="MF_00116"/>
    </source>
</evidence>
<comment type="function">
    <text evidence="1">This enzyme is involved in nucleotide metabolism: it produces dUMP, the immediate precursor of thymidine nucleotides and it decreases the intracellular concentration of dUTP so that uracil cannot be incorporated into DNA.</text>
</comment>
<comment type="catalytic activity">
    <reaction evidence="1">
        <text>dUTP + H2O = dUMP + diphosphate + H(+)</text>
        <dbReference type="Rhea" id="RHEA:10248"/>
        <dbReference type="ChEBI" id="CHEBI:15377"/>
        <dbReference type="ChEBI" id="CHEBI:15378"/>
        <dbReference type="ChEBI" id="CHEBI:33019"/>
        <dbReference type="ChEBI" id="CHEBI:61555"/>
        <dbReference type="ChEBI" id="CHEBI:246422"/>
        <dbReference type="EC" id="3.6.1.23"/>
    </reaction>
</comment>
<comment type="cofactor">
    <cofactor evidence="1">
        <name>Mg(2+)</name>
        <dbReference type="ChEBI" id="CHEBI:18420"/>
    </cofactor>
</comment>
<comment type="pathway">
    <text evidence="1">Pyrimidine metabolism; dUMP biosynthesis; dUMP from dCTP (dUTP route): step 2/2.</text>
</comment>
<comment type="similarity">
    <text evidence="1">Belongs to the dUTPase family.</text>
</comment>
<keyword id="KW-0378">Hydrolase</keyword>
<keyword id="KW-0460">Magnesium</keyword>
<keyword id="KW-0479">Metal-binding</keyword>
<keyword id="KW-0546">Nucleotide metabolism</keyword>
<reference key="1">
    <citation type="submission" date="2008-06" db="EMBL/GenBank/DDBJ databases">
        <title>Genome and proteome analysis of A. pleuropneumoniae serotype 7.</title>
        <authorList>
            <person name="Linke B."/>
            <person name="Buettner F."/>
            <person name="Martinez-Arias R."/>
            <person name="Goesmann A."/>
            <person name="Baltes N."/>
            <person name="Tegetmeyer H."/>
            <person name="Singh M."/>
            <person name="Gerlach G.F."/>
        </authorList>
    </citation>
    <scope>NUCLEOTIDE SEQUENCE [LARGE SCALE GENOMIC DNA]</scope>
    <source>
        <strain>AP76</strain>
    </source>
</reference>
<sequence length="151" mass="16013">MKQIDLKILDGRIGNEFPLPAYATEGSAGLDLRALTESALTVAPGQTVLIPTGISIYIADPNLAAVILPRSGLGHKNGIVLGNLVGLIDSDYQGPLMVSLWNRSDKPFTVEVGDRIAQLVFVPVVQASFNIVNDFAQTERGEGGFGHSGKQ</sequence>
<name>DUT_ACTP7</name>
<proteinExistence type="inferred from homology"/>
<feature type="chain" id="PRO_1000094939" description="Deoxyuridine 5'-triphosphate nucleotidohydrolase">
    <location>
        <begin position="1"/>
        <end position="151"/>
    </location>
</feature>
<feature type="binding site" evidence="1">
    <location>
        <begin position="70"/>
        <end position="72"/>
    </location>
    <ligand>
        <name>substrate</name>
    </ligand>
</feature>
<feature type="binding site" evidence="1">
    <location>
        <position position="83"/>
    </location>
    <ligand>
        <name>substrate</name>
    </ligand>
</feature>
<feature type="binding site" evidence="1">
    <location>
        <begin position="87"/>
        <end position="89"/>
    </location>
    <ligand>
        <name>substrate</name>
    </ligand>
</feature>
<feature type="binding site" evidence="1">
    <location>
        <position position="97"/>
    </location>
    <ligand>
        <name>substrate</name>
    </ligand>
</feature>